<proteinExistence type="inferred from homology"/>
<comment type="catalytic activity">
    <reaction evidence="1">
        <text>(R)-pantothenate + ATP = (R)-4'-phosphopantothenate + ADP + H(+)</text>
        <dbReference type="Rhea" id="RHEA:16373"/>
        <dbReference type="ChEBI" id="CHEBI:10986"/>
        <dbReference type="ChEBI" id="CHEBI:15378"/>
        <dbReference type="ChEBI" id="CHEBI:29032"/>
        <dbReference type="ChEBI" id="CHEBI:30616"/>
        <dbReference type="ChEBI" id="CHEBI:456216"/>
        <dbReference type="EC" id="2.7.1.33"/>
    </reaction>
</comment>
<comment type="pathway">
    <text evidence="1">Cofactor biosynthesis; coenzyme A biosynthesis; CoA from (R)-pantothenate: step 1/5.</text>
</comment>
<comment type="subcellular location">
    <subcellularLocation>
        <location evidence="1">Cytoplasm</location>
    </subcellularLocation>
</comment>
<comment type="similarity">
    <text evidence="1">Belongs to the prokaryotic pantothenate kinase family.</text>
</comment>
<name>COAA_SALG2</name>
<sequence length="316" mass="36201">MSIKEQSLMTPYLQFDRSQWAALRDSVPMTLTEDEIAQLKGINEDLSLEEVAEIYLPLSRLLNFYISSNLRRQAVLEQFLGTNGQRIPYIISIAGSVAVGKSTTARVLQALLSRWPEHRRVELITTDGFLHPNQVLKERGLMKKKGFPESYDMHRLVKFVSDLKSGVPNVTAPVYSHLIYDVIPEGDKTVAQPDILILEGLNVLQSGMDYPHDPHHVLVSDFVDFSIYVDAPEELLQTWYINRFLKFREGAFTDPDSYFHNYAKLSKEEAVNTATSLWKEINWLNLKQNILPTRERASLIMTKSANHAVEQVRLRK</sequence>
<reference key="1">
    <citation type="journal article" date="2008" name="Genome Res.">
        <title>Comparative genome analysis of Salmonella enteritidis PT4 and Salmonella gallinarum 287/91 provides insights into evolutionary and host adaptation pathways.</title>
        <authorList>
            <person name="Thomson N.R."/>
            <person name="Clayton D.J."/>
            <person name="Windhorst D."/>
            <person name="Vernikos G."/>
            <person name="Davidson S."/>
            <person name="Churcher C."/>
            <person name="Quail M.A."/>
            <person name="Stevens M."/>
            <person name="Jones M.A."/>
            <person name="Watson M."/>
            <person name="Barron A."/>
            <person name="Layton A."/>
            <person name="Pickard D."/>
            <person name="Kingsley R.A."/>
            <person name="Bignell A."/>
            <person name="Clark L."/>
            <person name="Harris B."/>
            <person name="Ormond D."/>
            <person name="Abdellah Z."/>
            <person name="Brooks K."/>
            <person name="Cherevach I."/>
            <person name="Chillingworth T."/>
            <person name="Woodward J."/>
            <person name="Norberczak H."/>
            <person name="Lord A."/>
            <person name="Arrowsmith C."/>
            <person name="Jagels K."/>
            <person name="Moule S."/>
            <person name="Mungall K."/>
            <person name="Saunders M."/>
            <person name="Whitehead S."/>
            <person name="Chabalgoity J.A."/>
            <person name="Maskell D."/>
            <person name="Humphreys T."/>
            <person name="Roberts M."/>
            <person name="Barrow P.A."/>
            <person name="Dougan G."/>
            <person name="Parkhill J."/>
        </authorList>
    </citation>
    <scope>NUCLEOTIDE SEQUENCE [LARGE SCALE GENOMIC DNA]</scope>
    <source>
        <strain>287/91 / NCTC 13346</strain>
    </source>
</reference>
<evidence type="ECO:0000255" key="1">
    <source>
        <dbReference type="HAMAP-Rule" id="MF_00215"/>
    </source>
</evidence>
<accession>B5RFK9</accession>
<feature type="chain" id="PRO_1000099946" description="Pantothenate kinase">
    <location>
        <begin position="1"/>
        <end position="316"/>
    </location>
</feature>
<feature type="binding site" evidence="1">
    <location>
        <begin position="95"/>
        <end position="102"/>
    </location>
    <ligand>
        <name>ATP</name>
        <dbReference type="ChEBI" id="CHEBI:30616"/>
    </ligand>
</feature>
<keyword id="KW-0067">ATP-binding</keyword>
<keyword id="KW-0173">Coenzyme A biosynthesis</keyword>
<keyword id="KW-0963">Cytoplasm</keyword>
<keyword id="KW-0418">Kinase</keyword>
<keyword id="KW-0547">Nucleotide-binding</keyword>
<keyword id="KW-0808">Transferase</keyword>
<dbReference type="EC" id="2.7.1.33" evidence="1"/>
<dbReference type="EMBL" id="AM933173">
    <property type="protein sequence ID" value="CAR39252.1"/>
    <property type="molecule type" value="Genomic_DNA"/>
</dbReference>
<dbReference type="RefSeq" id="WP_000023071.1">
    <property type="nucleotide sequence ID" value="NC_011274.1"/>
</dbReference>
<dbReference type="SMR" id="B5RFK9"/>
<dbReference type="KEGG" id="seg:SG3462"/>
<dbReference type="HOGENOM" id="CLU_053818_1_1_6"/>
<dbReference type="UniPathway" id="UPA00241">
    <property type="reaction ID" value="UER00352"/>
</dbReference>
<dbReference type="Proteomes" id="UP000008321">
    <property type="component" value="Chromosome"/>
</dbReference>
<dbReference type="GO" id="GO:0005737">
    <property type="term" value="C:cytoplasm"/>
    <property type="evidence" value="ECO:0007669"/>
    <property type="project" value="UniProtKB-SubCell"/>
</dbReference>
<dbReference type="GO" id="GO:0005524">
    <property type="term" value="F:ATP binding"/>
    <property type="evidence" value="ECO:0007669"/>
    <property type="project" value="UniProtKB-UniRule"/>
</dbReference>
<dbReference type="GO" id="GO:0004594">
    <property type="term" value="F:pantothenate kinase activity"/>
    <property type="evidence" value="ECO:0007669"/>
    <property type="project" value="UniProtKB-UniRule"/>
</dbReference>
<dbReference type="GO" id="GO:0015937">
    <property type="term" value="P:coenzyme A biosynthetic process"/>
    <property type="evidence" value="ECO:0007669"/>
    <property type="project" value="UniProtKB-UniRule"/>
</dbReference>
<dbReference type="CDD" id="cd02025">
    <property type="entry name" value="PanK"/>
    <property type="match status" value="1"/>
</dbReference>
<dbReference type="FunFam" id="3.40.50.300:FF:000242">
    <property type="entry name" value="Pantothenate kinase"/>
    <property type="match status" value="1"/>
</dbReference>
<dbReference type="Gene3D" id="3.40.50.300">
    <property type="entry name" value="P-loop containing nucleotide triphosphate hydrolases"/>
    <property type="match status" value="1"/>
</dbReference>
<dbReference type="HAMAP" id="MF_00215">
    <property type="entry name" value="Pantothen_kinase_1"/>
    <property type="match status" value="1"/>
</dbReference>
<dbReference type="InterPro" id="IPR027417">
    <property type="entry name" value="P-loop_NTPase"/>
</dbReference>
<dbReference type="InterPro" id="IPR004566">
    <property type="entry name" value="PanK"/>
</dbReference>
<dbReference type="InterPro" id="IPR006083">
    <property type="entry name" value="PRK/URK"/>
</dbReference>
<dbReference type="NCBIfam" id="TIGR00554">
    <property type="entry name" value="panK_bact"/>
    <property type="match status" value="1"/>
</dbReference>
<dbReference type="PANTHER" id="PTHR10285">
    <property type="entry name" value="URIDINE KINASE"/>
    <property type="match status" value="1"/>
</dbReference>
<dbReference type="Pfam" id="PF00485">
    <property type="entry name" value="PRK"/>
    <property type="match status" value="1"/>
</dbReference>
<dbReference type="PIRSF" id="PIRSF000545">
    <property type="entry name" value="Pantothenate_kin"/>
    <property type="match status" value="1"/>
</dbReference>
<dbReference type="SUPFAM" id="SSF52540">
    <property type="entry name" value="P-loop containing nucleoside triphosphate hydrolases"/>
    <property type="match status" value="1"/>
</dbReference>
<protein>
    <recommendedName>
        <fullName evidence="1">Pantothenate kinase</fullName>
        <ecNumber evidence="1">2.7.1.33</ecNumber>
    </recommendedName>
    <alternativeName>
        <fullName evidence="1">Pantothenic acid kinase</fullName>
    </alternativeName>
</protein>
<gene>
    <name evidence="1" type="primary">coaA</name>
    <name type="ordered locus">SG3462</name>
</gene>
<organism>
    <name type="scientific">Salmonella gallinarum (strain 287/91 / NCTC 13346)</name>
    <dbReference type="NCBI Taxonomy" id="550538"/>
    <lineage>
        <taxon>Bacteria</taxon>
        <taxon>Pseudomonadati</taxon>
        <taxon>Pseudomonadota</taxon>
        <taxon>Gammaproteobacteria</taxon>
        <taxon>Enterobacterales</taxon>
        <taxon>Enterobacteriaceae</taxon>
        <taxon>Salmonella</taxon>
    </lineage>
</organism>